<sequence length="23" mass="2630">RLKVIPEKLKDVKLVCTDVFGDN</sequence>
<comment type="function">
    <text>The enzymes which catalyze the reversible phosphorolysis of pyrimidine nucleosides are involved in the degradation of these compounds and in their utilization as carbon and energy sources, or in the rescue of pyrimidine bases for nucleotide synthesis.</text>
</comment>
<comment type="catalytic activity">
    <reaction>
        <text>uridine + phosphate = alpha-D-ribose 1-phosphate + uracil</text>
        <dbReference type="Rhea" id="RHEA:24388"/>
        <dbReference type="ChEBI" id="CHEBI:16704"/>
        <dbReference type="ChEBI" id="CHEBI:17568"/>
        <dbReference type="ChEBI" id="CHEBI:43474"/>
        <dbReference type="ChEBI" id="CHEBI:57720"/>
        <dbReference type="EC" id="2.4.2.3"/>
    </reaction>
</comment>
<comment type="pathway">
    <text>Pyrimidine metabolism; UMP biosynthesis via salvage pathway; uracil from uridine (phosphorylase route): step 1/1.</text>
</comment>
<comment type="subunit">
    <text>Homotetramer.</text>
</comment>
<comment type="similarity">
    <text evidence="1">Belongs to the PNP/UDP phosphorylase family.</text>
</comment>
<keyword id="KW-0903">Direct protein sequencing</keyword>
<keyword id="KW-0328">Glycosyltransferase</keyword>
<keyword id="KW-0808">Transferase</keyword>
<dbReference type="EC" id="2.4.2.3"/>
<dbReference type="PIR" id="S11383">
    <property type="entry name" value="S11383"/>
</dbReference>
<dbReference type="STRING" id="47715.AWJ15_05475"/>
<dbReference type="eggNOG" id="COG1898">
    <property type="taxonomic scope" value="Bacteria"/>
</dbReference>
<dbReference type="UniPathway" id="UPA00574">
    <property type="reaction ID" value="UER00633"/>
</dbReference>
<dbReference type="GO" id="GO:0004850">
    <property type="term" value="F:uridine phosphorylase activity"/>
    <property type="evidence" value="ECO:0007669"/>
    <property type="project" value="UniProtKB-EC"/>
</dbReference>
<dbReference type="GO" id="GO:0044206">
    <property type="term" value="P:UMP salvage"/>
    <property type="evidence" value="ECO:0007669"/>
    <property type="project" value="UniProtKB-UniPathway"/>
</dbReference>
<proteinExistence type="evidence at protein level"/>
<organism>
    <name type="scientific">Lacticaseibacillus rhamnosus</name>
    <name type="common">Lactobacillus rhamnosus</name>
    <dbReference type="NCBI Taxonomy" id="47715"/>
    <lineage>
        <taxon>Bacteria</taxon>
        <taxon>Bacillati</taxon>
        <taxon>Bacillota</taxon>
        <taxon>Bacilli</taxon>
        <taxon>Lactobacillales</taxon>
        <taxon>Lactobacillaceae</taxon>
        <taxon>Lacticaseibacillus</taxon>
    </lineage>
</organism>
<reference key="1">
    <citation type="journal article" date="1990" name="Biochim. Biophys. Acta">
        <title>Purification and characterization of uridine and thymidine phosphorylase from Lactobacillus casei.</title>
        <authorList>
            <person name="Avraham Y."/>
            <person name="Grossowicz N."/>
            <person name="Yashphe J."/>
        </authorList>
    </citation>
    <scope>PROTEIN SEQUENCE</scope>
    <source>
        <strain>ATCC 7469 / DSM 20021 / JCM 1136 / CCUG 21452 / KCTC 1046 / NCDO 243 / NCIMB 6375 / NCTC 12953</strain>
    </source>
</reference>
<name>UDP_LACRH</name>
<protein>
    <recommendedName>
        <fullName>Uridine phosphorylase</fullName>
        <ecNumber>2.4.2.3</ecNumber>
    </recommendedName>
    <alternativeName>
        <fullName>UDRPase</fullName>
    </alternativeName>
</protein>
<accession>P19662</accession>
<feature type="chain" id="PRO_0000063189" description="Uridine phosphorylase">
    <location>
        <begin position="1"/>
        <end position="23" status="greater than"/>
    </location>
</feature>
<feature type="unsure residue" description="R or S">
    <location>
        <position position="1"/>
    </location>
</feature>
<feature type="unsure residue" description="E or T">
    <location>
        <position position="7"/>
    </location>
</feature>
<feature type="non-terminal residue">
    <location>
        <position position="23"/>
    </location>
</feature>
<evidence type="ECO:0000305" key="1"/>
<gene>
    <name type="primary">udp</name>
</gene>